<protein>
    <recommendedName>
        <fullName evidence="2">Eukaryotic translation initiation factor 3 subunit D-2</fullName>
        <shortName evidence="2">eIF3d-2</shortName>
    </recommendedName>
    <alternativeName>
        <fullName evidence="2">Eukaryotic translation initiation factor 3 subunit 7-2</fullName>
    </alternativeName>
</protein>
<evidence type="ECO:0000250" key="1">
    <source>
        <dbReference type="UniProtKB" id="K7IM66"/>
    </source>
</evidence>
<evidence type="ECO:0000255" key="2">
    <source>
        <dbReference type="HAMAP-Rule" id="MF_03003"/>
    </source>
</evidence>
<evidence type="ECO:0000256" key="3">
    <source>
        <dbReference type="SAM" id="MobiDB-lite"/>
    </source>
</evidence>
<keyword id="KW-0963">Cytoplasm</keyword>
<keyword id="KW-0396">Initiation factor</keyword>
<keyword id="KW-0648">Protein biosynthesis</keyword>
<keyword id="KW-1185">Reference proteome</keyword>
<keyword id="KW-0694">RNA-binding</keyword>
<gene>
    <name evidence="2" type="primary">eIF3d2</name>
    <name evidence="2" type="synonym">eIF3-S7-2</name>
    <name type="ORF">GD20597</name>
</gene>
<reference key="1">
    <citation type="journal article" date="2007" name="Nature">
        <title>Evolution of genes and genomes on the Drosophila phylogeny.</title>
        <authorList>
            <consortium name="Drosophila 12 genomes consortium"/>
        </authorList>
    </citation>
    <scope>NUCLEOTIDE SEQUENCE [LARGE SCALE GENOMIC DNA]</scope>
</reference>
<organism>
    <name type="scientific">Drosophila simulans</name>
    <name type="common">Fruit fly</name>
    <dbReference type="NCBI Taxonomy" id="7240"/>
    <lineage>
        <taxon>Eukaryota</taxon>
        <taxon>Metazoa</taxon>
        <taxon>Ecdysozoa</taxon>
        <taxon>Arthropoda</taxon>
        <taxon>Hexapoda</taxon>
        <taxon>Insecta</taxon>
        <taxon>Pterygota</taxon>
        <taxon>Neoptera</taxon>
        <taxon>Endopterygota</taxon>
        <taxon>Diptera</taxon>
        <taxon>Brachycera</taxon>
        <taxon>Muscomorpha</taxon>
        <taxon>Ephydroidea</taxon>
        <taxon>Drosophilidae</taxon>
        <taxon>Drosophila</taxon>
        <taxon>Sophophora</taxon>
    </lineage>
</organism>
<proteinExistence type="inferred from homology"/>
<feature type="chain" id="PRO_0000364159" description="Eukaryotic translation initiation factor 3 subunit D-2">
    <location>
        <begin position="1"/>
        <end position="551"/>
    </location>
</feature>
<feature type="region of interest" description="Disordered" evidence="3">
    <location>
        <begin position="108"/>
        <end position="152"/>
    </location>
</feature>
<feature type="region of interest" description="RNA gate" evidence="1">
    <location>
        <begin position="290"/>
        <end position="304"/>
    </location>
</feature>
<feature type="region of interest" description="Disordered" evidence="3">
    <location>
        <begin position="527"/>
        <end position="551"/>
    </location>
</feature>
<feature type="compositionally biased region" description="Low complexity" evidence="3">
    <location>
        <begin position="115"/>
        <end position="136"/>
    </location>
</feature>
<accession>B4QT07</accession>
<sequence length="551" mass="62778">MSNYAPFIKPYVEYNEHGWGPCEVPELDVPYQPFCKSDRLGKICDWTAMVPEKKFPSKYASTFGNNSQYAYFYEDDDSTFHLVDTTGSKATKPYQRGRYRTNMRNNVRTRGRTGRGTPNIASLGGSTAGGATASSTKYGKGRHTRNTQNVGRRFGRNAPTRIRESSVMVQSNWVSIEEIDFPRLLKLALPNIKEGKDIATCGSLEFYDKLYDRVNLRNEKPLQKMARVVHTVTTTDDPVIRRLSKTMGNVFATDEILSTIMCCTRSNYSWDVVVEKLGTKVFLDKRYNDQFDLLTVNETSVEPPMEEEGSINSAHSLAMEATLINHNFSQQVLRIGDQEQRFMFEEPNPFEEPGVDLASIGYRYRQWDLGNDVVLIARCKHNAVIQGPNGDMQFLSIKALNEWDSKVTNSVEWRQKLDTQRGAVLASELRNNACKLARWTVEAVLAGSDQLKLGYVSRMNPRDHLRHVILGTQQFKPQEFATQINLNMDNSWGVLRCLIDLVMKQPDGKYLIMKDPNKPMIRLYDVPENAFDSDRDEEEESSEPLSNSNDN</sequence>
<name>EI3D2_DROSI</name>
<comment type="function">
    <text evidence="2">mRNA cap-binding component of the eukaryotic translation initiation factor 3 (eIF-3) complex, which is involved in protein synthesis of a specialized repertoire of mRNAs and, together with other initiation factors, stimulates binding of mRNA and methionyl-tRNAi to the 40S ribosome. The eIF-3 complex specifically targets and initiates translation of a subset of mRNAs involved in cell proliferation. In the eIF-3 complex, eif3d specifically recognizes and binds the 7-methylguanosine cap of a subset of mRNAs.</text>
</comment>
<comment type="subunit">
    <text evidence="2">Component of the eukaryotic translation initiation factor 3 (eIF-3) complex. The eIF-3 complex interacts with pix.</text>
</comment>
<comment type="subcellular location">
    <subcellularLocation>
        <location evidence="2">Cytoplasm</location>
    </subcellularLocation>
</comment>
<comment type="domain">
    <text evidence="2">The RNA gate region regulates mRNA cap recognition to prevent promiscuous mRNA-binding before assembly of eif3d into the full eukaryotic translation initiation factor 3 (eIF-3) complex.</text>
</comment>
<comment type="similarity">
    <text evidence="2">Belongs to the eIF-3 subunit D family.</text>
</comment>
<dbReference type="EMBL" id="CM000364">
    <property type="protein sequence ID" value="EDX13267.1"/>
    <property type="molecule type" value="Genomic_DNA"/>
</dbReference>
<dbReference type="SMR" id="B4QT07"/>
<dbReference type="STRING" id="7240.B4QT07"/>
<dbReference type="EnsemblMetazoa" id="FBtr0220507">
    <property type="protein sequence ID" value="FBpp0218999"/>
    <property type="gene ID" value="FBgn0192064"/>
</dbReference>
<dbReference type="EnsemblMetazoa" id="XM_002103728.4">
    <property type="protein sequence ID" value="XP_002103764.1"/>
    <property type="gene ID" value="LOC6728418"/>
</dbReference>
<dbReference type="GeneID" id="6728418"/>
<dbReference type="KEGG" id="dsi:Dsimw501_GD20597"/>
<dbReference type="CTD" id="41475"/>
<dbReference type="HOGENOM" id="CLU_024521_2_0_1"/>
<dbReference type="OMA" id="CKHNGVI"/>
<dbReference type="OrthoDB" id="16538at2759"/>
<dbReference type="PhylomeDB" id="B4QT07"/>
<dbReference type="Proteomes" id="UP000000304">
    <property type="component" value="Chromosome 3R"/>
</dbReference>
<dbReference type="Bgee" id="FBgn0192064">
    <property type="expression patterns" value="Expressed in male reproductive system and 2 other cell types or tissues"/>
</dbReference>
<dbReference type="GO" id="GO:0016282">
    <property type="term" value="C:eukaryotic 43S preinitiation complex"/>
    <property type="evidence" value="ECO:0007669"/>
    <property type="project" value="UniProtKB-UniRule"/>
</dbReference>
<dbReference type="GO" id="GO:0033290">
    <property type="term" value="C:eukaryotic 48S preinitiation complex"/>
    <property type="evidence" value="ECO:0007669"/>
    <property type="project" value="UniProtKB-UniRule"/>
</dbReference>
<dbReference type="GO" id="GO:0005852">
    <property type="term" value="C:eukaryotic translation initiation factor 3 complex"/>
    <property type="evidence" value="ECO:0000250"/>
    <property type="project" value="UniProtKB"/>
</dbReference>
<dbReference type="GO" id="GO:0098808">
    <property type="term" value="F:mRNA cap binding"/>
    <property type="evidence" value="ECO:0007669"/>
    <property type="project" value="UniProtKB-UniRule"/>
</dbReference>
<dbReference type="GO" id="GO:0003743">
    <property type="term" value="F:translation initiation factor activity"/>
    <property type="evidence" value="ECO:0000250"/>
    <property type="project" value="UniProtKB"/>
</dbReference>
<dbReference type="GO" id="GO:0002191">
    <property type="term" value="P:cap-dependent translational initiation"/>
    <property type="evidence" value="ECO:0007669"/>
    <property type="project" value="UniProtKB-UniRule"/>
</dbReference>
<dbReference type="GO" id="GO:0001732">
    <property type="term" value="P:formation of cytoplasmic translation initiation complex"/>
    <property type="evidence" value="ECO:0007669"/>
    <property type="project" value="UniProtKB-UniRule"/>
</dbReference>
<dbReference type="GO" id="GO:0006446">
    <property type="term" value="P:regulation of translational initiation"/>
    <property type="evidence" value="ECO:0000250"/>
    <property type="project" value="UniProtKB"/>
</dbReference>
<dbReference type="HAMAP" id="MF_03003">
    <property type="entry name" value="eIF3d"/>
    <property type="match status" value="1"/>
</dbReference>
<dbReference type="InterPro" id="IPR007783">
    <property type="entry name" value="eIF3d"/>
</dbReference>
<dbReference type="PANTHER" id="PTHR12399">
    <property type="entry name" value="EUKARYOTIC TRANSLATION INITIATION FACTOR 3 SUBUNIT 7"/>
    <property type="match status" value="1"/>
</dbReference>
<dbReference type="PANTHER" id="PTHR12399:SF0">
    <property type="entry name" value="EUKARYOTIC TRANSLATION INITIATION FACTOR 3 SUBUNIT D"/>
    <property type="match status" value="1"/>
</dbReference>
<dbReference type="Pfam" id="PF05091">
    <property type="entry name" value="eIF-3_zeta"/>
    <property type="match status" value="1"/>
</dbReference>
<dbReference type="PIRSF" id="PIRSF016281">
    <property type="entry name" value="EIF-3_zeta"/>
    <property type="match status" value="1"/>
</dbReference>